<protein>
    <recommendedName>
        <fullName evidence="2">Translation initiation factor IF-2</fullName>
    </recommendedName>
</protein>
<dbReference type="EMBL" id="AE017244">
    <property type="protein sequence ID" value="AAZ53947.1"/>
    <property type="molecule type" value="Genomic_DNA"/>
</dbReference>
<dbReference type="RefSeq" id="WP_011290373.1">
    <property type="nucleotide sequence ID" value="NC_007332.1"/>
</dbReference>
<dbReference type="SMR" id="Q4A7E2"/>
<dbReference type="KEGG" id="mhp:MHP7448_0584"/>
<dbReference type="HOGENOM" id="CLU_006301_5_1_14"/>
<dbReference type="Proteomes" id="UP000000553">
    <property type="component" value="Chromosome"/>
</dbReference>
<dbReference type="GO" id="GO:0005829">
    <property type="term" value="C:cytosol"/>
    <property type="evidence" value="ECO:0007669"/>
    <property type="project" value="TreeGrafter"/>
</dbReference>
<dbReference type="GO" id="GO:0005525">
    <property type="term" value="F:GTP binding"/>
    <property type="evidence" value="ECO:0007669"/>
    <property type="project" value="UniProtKB-KW"/>
</dbReference>
<dbReference type="GO" id="GO:0003924">
    <property type="term" value="F:GTPase activity"/>
    <property type="evidence" value="ECO:0007669"/>
    <property type="project" value="UniProtKB-UniRule"/>
</dbReference>
<dbReference type="GO" id="GO:0003743">
    <property type="term" value="F:translation initiation factor activity"/>
    <property type="evidence" value="ECO:0007669"/>
    <property type="project" value="UniProtKB-UniRule"/>
</dbReference>
<dbReference type="CDD" id="cd01887">
    <property type="entry name" value="IF2_eIF5B"/>
    <property type="match status" value="1"/>
</dbReference>
<dbReference type="CDD" id="cd03702">
    <property type="entry name" value="IF2_mtIF2_II"/>
    <property type="match status" value="1"/>
</dbReference>
<dbReference type="CDD" id="cd03692">
    <property type="entry name" value="mtIF2_IVc"/>
    <property type="match status" value="1"/>
</dbReference>
<dbReference type="FunFam" id="2.40.30.10:FF:000008">
    <property type="entry name" value="Translation initiation factor IF-2"/>
    <property type="match status" value="1"/>
</dbReference>
<dbReference type="FunFam" id="2.40.30.10:FF:000054">
    <property type="entry name" value="Translation initiation factor IF-2"/>
    <property type="match status" value="1"/>
</dbReference>
<dbReference type="FunFam" id="3.40.50.10050:FF:000001">
    <property type="entry name" value="Translation initiation factor IF-2"/>
    <property type="match status" value="1"/>
</dbReference>
<dbReference type="FunFam" id="3.40.50.300:FF:000019">
    <property type="entry name" value="Translation initiation factor IF-2"/>
    <property type="match status" value="1"/>
</dbReference>
<dbReference type="Gene3D" id="3.40.50.300">
    <property type="entry name" value="P-loop containing nucleotide triphosphate hydrolases"/>
    <property type="match status" value="1"/>
</dbReference>
<dbReference type="Gene3D" id="2.40.30.10">
    <property type="entry name" value="Translation factors"/>
    <property type="match status" value="2"/>
</dbReference>
<dbReference type="Gene3D" id="3.40.50.10050">
    <property type="entry name" value="Translation initiation factor IF- 2, domain 3"/>
    <property type="match status" value="1"/>
</dbReference>
<dbReference type="HAMAP" id="MF_00100_B">
    <property type="entry name" value="IF_2_B"/>
    <property type="match status" value="1"/>
</dbReference>
<dbReference type="InterPro" id="IPR053905">
    <property type="entry name" value="EF-G-like_DII"/>
</dbReference>
<dbReference type="InterPro" id="IPR044145">
    <property type="entry name" value="IF2_II"/>
</dbReference>
<dbReference type="InterPro" id="IPR006847">
    <property type="entry name" value="IF2_N"/>
</dbReference>
<dbReference type="InterPro" id="IPR027417">
    <property type="entry name" value="P-loop_NTPase"/>
</dbReference>
<dbReference type="InterPro" id="IPR005225">
    <property type="entry name" value="Small_GTP-bd"/>
</dbReference>
<dbReference type="InterPro" id="IPR000795">
    <property type="entry name" value="T_Tr_GTP-bd_dom"/>
</dbReference>
<dbReference type="InterPro" id="IPR000178">
    <property type="entry name" value="TF_IF2_bacterial-like"/>
</dbReference>
<dbReference type="InterPro" id="IPR015760">
    <property type="entry name" value="TIF_IF2"/>
</dbReference>
<dbReference type="InterPro" id="IPR023115">
    <property type="entry name" value="TIF_IF2_dom3"/>
</dbReference>
<dbReference type="InterPro" id="IPR036925">
    <property type="entry name" value="TIF_IF2_dom3_sf"/>
</dbReference>
<dbReference type="InterPro" id="IPR009000">
    <property type="entry name" value="Transl_B-barrel_sf"/>
</dbReference>
<dbReference type="NCBIfam" id="TIGR00487">
    <property type="entry name" value="IF-2"/>
    <property type="match status" value="1"/>
</dbReference>
<dbReference type="NCBIfam" id="TIGR00231">
    <property type="entry name" value="small_GTP"/>
    <property type="match status" value="1"/>
</dbReference>
<dbReference type="PANTHER" id="PTHR43381:SF5">
    <property type="entry name" value="TR-TYPE G DOMAIN-CONTAINING PROTEIN"/>
    <property type="match status" value="1"/>
</dbReference>
<dbReference type="PANTHER" id="PTHR43381">
    <property type="entry name" value="TRANSLATION INITIATION FACTOR IF-2-RELATED"/>
    <property type="match status" value="1"/>
</dbReference>
<dbReference type="Pfam" id="PF22042">
    <property type="entry name" value="EF-G_D2"/>
    <property type="match status" value="1"/>
</dbReference>
<dbReference type="Pfam" id="PF00009">
    <property type="entry name" value="GTP_EFTU"/>
    <property type="match status" value="1"/>
</dbReference>
<dbReference type="Pfam" id="PF11987">
    <property type="entry name" value="IF-2"/>
    <property type="match status" value="1"/>
</dbReference>
<dbReference type="Pfam" id="PF04760">
    <property type="entry name" value="IF2_N"/>
    <property type="match status" value="1"/>
</dbReference>
<dbReference type="PRINTS" id="PR00315">
    <property type="entry name" value="ELONGATNFCT"/>
</dbReference>
<dbReference type="SUPFAM" id="SSF52156">
    <property type="entry name" value="Initiation factor IF2/eIF5b, domain 3"/>
    <property type="match status" value="1"/>
</dbReference>
<dbReference type="SUPFAM" id="SSF52540">
    <property type="entry name" value="P-loop containing nucleoside triphosphate hydrolases"/>
    <property type="match status" value="1"/>
</dbReference>
<dbReference type="SUPFAM" id="SSF50447">
    <property type="entry name" value="Translation proteins"/>
    <property type="match status" value="2"/>
</dbReference>
<dbReference type="PROSITE" id="PS51722">
    <property type="entry name" value="G_TR_2"/>
    <property type="match status" value="1"/>
</dbReference>
<proteinExistence type="inferred from homology"/>
<gene>
    <name evidence="2" type="primary">infB</name>
    <name type="ordered locus">MHP7448_0584</name>
</gene>
<evidence type="ECO:0000250" key="1"/>
<evidence type="ECO:0000255" key="2">
    <source>
        <dbReference type="HAMAP-Rule" id="MF_00100"/>
    </source>
</evidence>
<comment type="function">
    <text evidence="2">One of the essential components for the initiation of protein synthesis. Protects formylmethionyl-tRNA from spontaneous hydrolysis and promotes its binding to the 30S ribosomal subunits. Also involved in the hydrolysis of GTP during the formation of the 70S ribosomal complex.</text>
</comment>
<comment type="subcellular location">
    <subcellularLocation>
        <location evidence="2">Cytoplasm</location>
    </subcellularLocation>
</comment>
<comment type="similarity">
    <text evidence="2">Belongs to the TRAFAC class translation factor GTPase superfamily. Classic translation factor GTPase family. IF-2 subfamily.</text>
</comment>
<keyword id="KW-0963">Cytoplasm</keyword>
<keyword id="KW-0342">GTP-binding</keyword>
<keyword id="KW-0396">Initiation factor</keyword>
<keyword id="KW-0547">Nucleotide-binding</keyword>
<keyword id="KW-0648">Protein biosynthesis</keyword>
<reference key="1">
    <citation type="journal article" date="2005" name="J. Bacteriol.">
        <title>Swine and poultry pathogens: the complete genome sequences of two strains of Mycoplasma hyopneumoniae and a strain of Mycoplasma synoviae.</title>
        <authorList>
            <person name="Vasconcelos A.T.R."/>
            <person name="Ferreira H.B."/>
            <person name="Bizarro C.V."/>
            <person name="Bonatto S.L."/>
            <person name="Carvalho M.O."/>
            <person name="Pinto P.M."/>
            <person name="Almeida D.F."/>
            <person name="Almeida L.G.P."/>
            <person name="Almeida R."/>
            <person name="Alves-Junior L."/>
            <person name="Assuncao E.N."/>
            <person name="Azevedo V.A.C."/>
            <person name="Bogo M.R."/>
            <person name="Brigido M.M."/>
            <person name="Brocchi M."/>
            <person name="Burity H.A."/>
            <person name="Camargo A.A."/>
            <person name="Camargo S.S."/>
            <person name="Carepo M.S."/>
            <person name="Carraro D.M."/>
            <person name="de Mattos Cascardo J.C."/>
            <person name="Castro L.A."/>
            <person name="Cavalcanti G."/>
            <person name="Chemale G."/>
            <person name="Collevatti R.G."/>
            <person name="Cunha C.W."/>
            <person name="Dallagiovanna B."/>
            <person name="Dambros B.P."/>
            <person name="Dellagostin O.A."/>
            <person name="Falcao C."/>
            <person name="Fantinatti-Garboggini F."/>
            <person name="Felipe M.S.S."/>
            <person name="Fiorentin L."/>
            <person name="Franco G.R."/>
            <person name="Freitas N.S.A."/>
            <person name="Frias D."/>
            <person name="Grangeiro T.B."/>
            <person name="Grisard E.C."/>
            <person name="Guimaraes C.T."/>
            <person name="Hungria M."/>
            <person name="Jardim S.N."/>
            <person name="Krieger M.A."/>
            <person name="Laurino J.P."/>
            <person name="Lima L.F.A."/>
            <person name="Lopes M.I."/>
            <person name="Loreto E.L.S."/>
            <person name="Madeira H.M.F."/>
            <person name="Manfio G.P."/>
            <person name="Maranhao A.Q."/>
            <person name="Martinkovics C.T."/>
            <person name="Medeiros S.R.B."/>
            <person name="Moreira M.A.M."/>
            <person name="Neiva M."/>
            <person name="Ramalho-Neto C.E."/>
            <person name="Nicolas M.F."/>
            <person name="Oliveira S.C."/>
            <person name="Paixao R.F.C."/>
            <person name="Pedrosa F.O."/>
            <person name="Pena S.D.J."/>
            <person name="Pereira M."/>
            <person name="Pereira-Ferrari L."/>
            <person name="Piffer I."/>
            <person name="Pinto L.S."/>
            <person name="Potrich D.P."/>
            <person name="Salim A.C.M."/>
            <person name="Santos F.R."/>
            <person name="Schmitt R."/>
            <person name="Schneider M.P.C."/>
            <person name="Schrank A."/>
            <person name="Schrank I.S."/>
            <person name="Schuck A.F."/>
            <person name="Seuanez H.N."/>
            <person name="Silva D.W."/>
            <person name="Silva R."/>
            <person name="Silva S.C."/>
            <person name="Soares C.M.A."/>
            <person name="Souza K.R.L."/>
            <person name="Souza R.C."/>
            <person name="Staats C.C."/>
            <person name="Steffens M.B.R."/>
            <person name="Teixeira S.M.R."/>
            <person name="Urmenyi T.P."/>
            <person name="Vainstein M.H."/>
            <person name="Zuccherato L.W."/>
            <person name="Simpson A.J.G."/>
            <person name="Zaha A."/>
        </authorList>
    </citation>
    <scope>NUCLEOTIDE SEQUENCE [LARGE SCALE GENOMIC DNA]</scope>
    <source>
        <strain>7448</strain>
    </source>
</reference>
<name>IF2_MESH7</name>
<accession>Q4A7E2</accession>
<feature type="chain" id="PRO_0000232586" description="Translation initiation factor IF-2">
    <location>
        <begin position="1"/>
        <end position="599"/>
    </location>
</feature>
<feature type="domain" description="tr-type G">
    <location>
        <begin position="111"/>
        <end position="278"/>
    </location>
</feature>
<feature type="region of interest" description="G1" evidence="1">
    <location>
        <begin position="120"/>
        <end position="127"/>
    </location>
</feature>
<feature type="region of interest" description="G2" evidence="1">
    <location>
        <begin position="145"/>
        <end position="149"/>
    </location>
</feature>
<feature type="region of interest" description="G3" evidence="1">
    <location>
        <begin position="166"/>
        <end position="169"/>
    </location>
</feature>
<feature type="region of interest" description="G4" evidence="1">
    <location>
        <begin position="220"/>
        <end position="223"/>
    </location>
</feature>
<feature type="region of interest" description="G5" evidence="1">
    <location>
        <begin position="256"/>
        <end position="258"/>
    </location>
</feature>
<feature type="binding site" evidence="2">
    <location>
        <begin position="120"/>
        <end position="127"/>
    </location>
    <ligand>
        <name>GTP</name>
        <dbReference type="ChEBI" id="CHEBI:37565"/>
    </ligand>
</feature>
<feature type="binding site" evidence="2">
    <location>
        <begin position="166"/>
        <end position="170"/>
    </location>
    <ligand>
        <name>GTP</name>
        <dbReference type="ChEBI" id="CHEBI:37565"/>
    </ligand>
</feature>
<feature type="binding site" evidence="2">
    <location>
        <begin position="220"/>
        <end position="223"/>
    </location>
    <ligand>
        <name>GTP</name>
        <dbReference type="ChEBI" id="CHEBI:37565"/>
    </ligand>
</feature>
<organism>
    <name type="scientific">Mesomycoplasma hyopneumoniae (strain 7448)</name>
    <name type="common">Mycoplasma hyopneumoniae</name>
    <dbReference type="NCBI Taxonomy" id="262722"/>
    <lineage>
        <taxon>Bacteria</taxon>
        <taxon>Bacillati</taxon>
        <taxon>Mycoplasmatota</taxon>
        <taxon>Mycoplasmoidales</taxon>
        <taxon>Metamycoplasmataceae</taxon>
        <taxon>Mesomycoplasma</taxon>
    </lineage>
</organism>
<sequence>MKKSQKRISNVSEIKAQLKTVETKVHNGVFLFSGIMTIAELAQKINVSVNQIITYFFHQAKMYNLNHSLSEDEIAEICLEFGLDFKKEVQIDASNFMEEVSILDQDKDLSPRPPIITVMGHVDHGKTTLLDYIRKTNIAKNEKGGITQHTGAYQVVFQGHIINFIDTPGHEAFTQMRARGAKVTDIIVLVVAADDGVMPQTKEAINHAAAANVPIIVFVNKMDKPNKDVDRIKNELSALNIVTEEWGGSNIFVYGSALTGQGIDTLFSSILLLAEILELKANKNRYPIGTVIEAKLHHNKGTIATLMVQNGTLMVRDFIVAGYQYGRIRSLENTNGQPIKFAPPGTPVIVTGLNYVPEAGDKFFGFHEEKFAKQLALEKKQSEKISKTKVQTKQQTKEKTLNIIVKADVAGIAQALHSTIEKLASKQVHIHILHSGVGIVNKADILLAQTSNSIIYAFNLQIPAAIKAQAKQAQVEIREHTIIYKIVDEIKKQVRGMREIRYELQQIGTAKIIAKFWFSKVGSIAGCSVLSGKFVENCKIELWRNSKLIHSGKIESLQRDKNPVKEVQVGNEFGTHIYKFNDIEIGDELKAFLDVEIEE</sequence>